<name>CINV1_ARATH</name>
<gene>
    <name evidence="9" type="primary">CINV1</name>
    <name evidence="10" type="synonym">INVG</name>
    <name type="ordered locus">At1g35580</name>
    <name type="ORF">F15O4.33</name>
</gene>
<comment type="function">
    <text evidence="2 3 4 5 6 7">Cytosolic invertase that specifically cleaves sucrose into glucose and fructose and is involved in the regulation of multiple tissue development including primary root elongation, root hair growth, leaf and silique development, and floral transition (PubMed:17220200, PubMed:19470642, PubMed:21441406, PubMed:25256212). Is involved in osmotic stress-induced inhibition on lateral root growth by controlling the concentration of hexose in cells (PubMed:17508130). May regulate sugar-mediated root development by controlling sucrose catabolism in root cells (PubMed:17220200). Contributes to carbon partitioning and cellulose biosynthesis in seedlings (PubMed:29569779).</text>
</comment>
<comment type="catalytic activity">
    <reaction evidence="5">
        <text>Hydrolysis of terminal non-reducing beta-D-fructofuranoside residues in beta-D-fructofuranosides.</text>
        <dbReference type="EC" id="3.2.1.26"/>
    </reaction>
</comment>
<comment type="biophysicochemical properties">
    <kinetics>
        <KM evidence="2 3">18.4 mM for sucrose</KM>
        <KM evidence="5">8.4 mM for sucrose</KM>
    </kinetics>
    <phDependence>
        <text evidence="2 3 5">Optimum pH is 7.0-8.0.</text>
    </phDependence>
    <temperatureDependence>
        <text evidence="6">Optimum temperature is 9 degrees Celsius.</text>
    </temperatureDependence>
</comment>
<comment type="subunit">
    <text evidence="2 6 8">Forms homohexamers (PubMed:32134001). Interacts with PIP5K9 (PubMed:17220200). Interaction with PIP5K9 represses CINV1 activity (PubMed:17220200). Interacts with GRF1, GRF2, GRF3, GRF4, GRF5, GRF6, GRF7, GRF8 and GRF10; these interactions are dependent of the phosphorylation at Ser-547 (PubMed:25256212).</text>
</comment>
<comment type="interaction">
    <interactant intactId="EBI-2008033">
        <id>Q9LQF2</id>
    </interactant>
    <interactant intactId="EBI-2008013">
        <id>Q8L850</id>
        <label>PIP5K9</label>
    </interactant>
    <organismsDiffer>false</organismsDiffer>
    <experiments>6</experiments>
</comment>
<comment type="subcellular location">
    <subcellularLocation>
        <location evidence="5">Cytoplasm</location>
        <location evidence="5">Cytosol</location>
    </subcellularLocation>
    <subcellularLocation>
        <location evidence="2">Nucleus</location>
    </subcellularLocation>
    <text evidence="2">Detected in membrane and nucleus when associated with PIP5K9.</text>
</comment>
<comment type="alternative products">
    <event type="alternative splicing"/>
    <isoform>
        <id>Q9LQF2-1</id>
        <name>1</name>
        <sequence type="displayed"/>
    </isoform>
    <text>A number of isoforms are produced. According to EST sequences.</text>
</comment>
<comment type="tissue specificity">
    <text evidence="3">Expressed in radicle, hypocotyls, root tips and vascular cylinder, leaf vasculature, shoot stipules, trichomes, stem, stigma apex and base of siliques.</text>
</comment>
<comment type="induction">
    <text evidence="3 5 6">Induced by mannitol in roots (PubMed:17508130). Induced by hydrogen peroxide (PubMed:21441406). Induced by dark-to-light transition in roots (PubMed:25256212).</text>
</comment>
<comment type="PTM">
    <text evidence="6">Phosphorylated at Ser-547 by CPK3 and CPK21.</text>
</comment>
<comment type="disruption phenotype">
    <text evidence="2 3 5">Reduced primary root length and increased length and number of lateral roots. Reduced plant growth and early flowering. Reduced seedling levels of glucose and fructose, but increased levels of sucrose.</text>
</comment>
<comment type="similarity">
    <text evidence="12">Belongs to the glycosyl hydrolase 100 family.</text>
</comment>
<protein>
    <recommendedName>
        <fullName evidence="12">Alkaline/neutral invertase CINV1</fullName>
        <shortName evidence="11">AtCINV1</shortName>
        <ecNumber evidence="5">3.2.1.26</ecNumber>
    </recommendedName>
    <alternativeName>
        <fullName evidence="12">Alkaline/neutral invertase G</fullName>
        <shortName evidence="10">A/N-INVG</shortName>
    </alternativeName>
    <alternativeName>
        <fullName evidence="9">Cytosolic invertase 1</fullName>
        <shortName evidence="9">AtCYT-INV1</shortName>
    </alternativeName>
</protein>
<dbReference type="EC" id="3.2.1.26" evidence="5"/>
<dbReference type="EMBL" id="AM230708">
    <property type="protein sequence ID" value="CAJ76698.1"/>
    <property type="molecule type" value="mRNA"/>
</dbReference>
<dbReference type="EMBL" id="AC007887">
    <property type="protein sequence ID" value="AAF79356.1"/>
    <property type="molecule type" value="Genomic_DNA"/>
</dbReference>
<dbReference type="EMBL" id="CP002684">
    <property type="protein sequence ID" value="AEE31812.1"/>
    <property type="molecule type" value="Genomic_DNA"/>
</dbReference>
<dbReference type="EMBL" id="CP002684">
    <property type="protein sequence ID" value="AEE31813.1"/>
    <property type="molecule type" value="Genomic_DNA"/>
</dbReference>
<dbReference type="EMBL" id="AY065247">
    <property type="protein sequence ID" value="AAL38723.1"/>
    <property type="molecule type" value="mRNA"/>
</dbReference>
<dbReference type="EMBL" id="AY142662">
    <property type="protein sequence ID" value="AAN13200.1"/>
    <property type="molecule type" value="mRNA"/>
</dbReference>
<dbReference type="PIR" id="A86477">
    <property type="entry name" value="A86477"/>
</dbReference>
<dbReference type="RefSeq" id="NP_174791.2">
    <molecule id="Q9LQF2-1"/>
    <property type="nucleotide sequence ID" value="NM_103255.2"/>
</dbReference>
<dbReference type="RefSeq" id="NP_849750.1">
    <molecule id="Q9LQF2-1"/>
    <property type="nucleotide sequence ID" value="NM_179419.4"/>
</dbReference>
<dbReference type="PDB" id="6TTJ">
    <property type="method" value="X-ray"/>
    <property type="resolution" value="3.39 A"/>
    <property type="chains" value="A/B/C/D/E/F/G/H/I/J/K/L=1-551"/>
</dbReference>
<dbReference type="PDBsum" id="6TTJ"/>
<dbReference type="SMR" id="Q9LQF2"/>
<dbReference type="BioGRID" id="25686">
    <property type="interactions" value="11"/>
</dbReference>
<dbReference type="FunCoup" id="Q9LQF2">
    <property type="interactions" value="398"/>
</dbReference>
<dbReference type="IntAct" id="Q9LQF2">
    <property type="interactions" value="6"/>
</dbReference>
<dbReference type="STRING" id="3702.Q9LQF2"/>
<dbReference type="CAZy" id="GH100">
    <property type="family name" value="Glycoside Hydrolase Family 100"/>
</dbReference>
<dbReference type="iPTMnet" id="Q9LQF2"/>
<dbReference type="PaxDb" id="3702-AT1G35580.2"/>
<dbReference type="ProteomicsDB" id="246497">
    <molecule id="Q9LQF2-1"/>
</dbReference>
<dbReference type="EnsemblPlants" id="AT1G35580.1">
    <molecule id="Q9LQF2-1"/>
    <property type="protein sequence ID" value="AT1G35580.1"/>
    <property type="gene ID" value="AT1G35580"/>
</dbReference>
<dbReference type="EnsemblPlants" id="AT1G35580.2">
    <molecule id="Q9LQF2-1"/>
    <property type="protein sequence ID" value="AT1G35580.2"/>
    <property type="gene ID" value="AT1G35580"/>
</dbReference>
<dbReference type="GeneID" id="840454"/>
<dbReference type="Gramene" id="AT1G35580.1">
    <molecule id="Q9LQF2-1"/>
    <property type="protein sequence ID" value="AT1G35580.1"/>
    <property type="gene ID" value="AT1G35580"/>
</dbReference>
<dbReference type="Gramene" id="AT1G35580.2">
    <molecule id="Q9LQF2-1"/>
    <property type="protein sequence ID" value="AT1G35580.2"/>
    <property type="gene ID" value="AT1G35580"/>
</dbReference>
<dbReference type="KEGG" id="ath:AT1G35580"/>
<dbReference type="Araport" id="AT1G35580"/>
<dbReference type="TAIR" id="AT1G35580">
    <property type="gene designation" value="CINV1"/>
</dbReference>
<dbReference type="eggNOG" id="ENOG502QPS0">
    <property type="taxonomic scope" value="Eukaryota"/>
</dbReference>
<dbReference type="HOGENOM" id="CLU_020846_1_1_1"/>
<dbReference type="InParanoid" id="Q9LQF2"/>
<dbReference type="OMA" id="RECIEQI"/>
<dbReference type="OrthoDB" id="585877at2759"/>
<dbReference type="PhylomeDB" id="Q9LQF2"/>
<dbReference type="BRENDA" id="3.2.1.26">
    <property type="organism ID" value="399"/>
</dbReference>
<dbReference type="PRO" id="PR:Q9LQF2"/>
<dbReference type="Proteomes" id="UP000006548">
    <property type="component" value="Chromosome 1"/>
</dbReference>
<dbReference type="ExpressionAtlas" id="Q9LQF2">
    <property type="expression patterns" value="baseline and differential"/>
</dbReference>
<dbReference type="GO" id="GO:0005829">
    <property type="term" value="C:cytosol"/>
    <property type="evidence" value="ECO:0000314"/>
    <property type="project" value="TAIR"/>
</dbReference>
<dbReference type="GO" id="GO:0016020">
    <property type="term" value="C:membrane"/>
    <property type="evidence" value="ECO:0000314"/>
    <property type="project" value="TAIR"/>
</dbReference>
<dbReference type="GO" id="GO:0005634">
    <property type="term" value="C:nucleus"/>
    <property type="evidence" value="ECO:0000314"/>
    <property type="project" value="TAIR"/>
</dbReference>
<dbReference type="GO" id="GO:0004564">
    <property type="term" value="F:beta-fructofuranosidase activity"/>
    <property type="evidence" value="ECO:0000314"/>
    <property type="project" value="TAIR"/>
</dbReference>
<dbReference type="GO" id="GO:0033926">
    <property type="term" value="F:endo-alpha-N-acetylgalactosaminidase activity"/>
    <property type="evidence" value="ECO:0007669"/>
    <property type="project" value="InterPro"/>
</dbReference>
<dbReference type="GO" id="GO:0004575">
    <property type="term" value="F:sucrose alpha-glucosidase activity"/>
    <property type="evidence" value="ECO:0000314"/>
    <property type="project" value="TAIR"/>
</dbReference>
<dbReference type="GO" id="GO:0006520">
    <property type="term" value="P:amino acid metabolic process"/>
    <property type="evidence" value="ECO:0000315"/>
    <property type="project" value="TAIR"/>
</dbReference>
<dbReference type="GO" id="GO:0005975">
    <property type="term" value="P:carbohydrate metabolic process"/>
    <property type="evidence" value="ECO:0000315"/>
    <property type="project" value="TAIR"/>
</dbReference>
<dbReference type="GO" id="GO:0034214">
    <property type="term" value="P:protein hexamerization"/>
    <property type="evidence" value="ECO:0000314"/>
    <property type="project" value="UniProtKB"/>
</dbReference>
<dbReference type="GO" id="GO:0042542">
    <property type="term" value="P:response to hydrogen peroxide"/>
    <property type="evidence" value="ECO:0000270"/>
    <property type="project" value="TAIR"/>
</dbReference>
<dbReference type="GO" id="GO:0048364">
    <property type="term" value="P:root development"/>
    <property type="evidence" value="ECO:0000315"/>
    <property type="project" value="TAIR"/>
</dbReference>
<dbReference type="GO" id="GO:0005987">
    <property type="term" value="P:sucrose catabolic process"/>
    <property type="evidence" value="ECO:0000314"/>
    <property type="project" value="TAIR"/>
</dbReference>
<dbReference type="FunFam" id="1.50.10.10:FF:000001">
    <property type="entry name" value="probable alkaline/neutral invertase B"/>
    <property type="match status" value="1"/>
</dbReference>
<dbReference type="Gene3D" id="1.50.10.10">
    <property type="match status" value="1"/>
</dbReference>
<dbReference type="InterPro" id="IPR008928">
    <property type="entry name" value="6-hairpin_glycosidase_sf"/>
</dbReference>
<dbReference type="InterPro" id="IPR012341">
    <property type="entry name" value="6hp_glycosidase-like_sf"/>
</dbReference>
<dbReference type="InterPro" id="IPR024746">
    <property type="entry name" value="Glyco_hydro_100"/>
</dbReference>
<dbReference type="PANTHER" id="PTHR31916">
    <property type="match status" value="1"/>
</dbReference>
<dbReference type="PANTHER" id="PTHR31916:SF48">
    <property type="entry name" value="ALKALINE_NEUTRAL INVERTASE CINV1"/>
    <property type="match status" value="1"/>
</dbReference>
<dbReference type="Pfam" id="PF12899">
    <property type="entry name" value="Glyco_hydro_100"/>
    <property type="match status" value="1"/>
</dbReference>
<dbReference type="SUPFAM" id="SSF48208">
    <property type="entry name" value="Six-hairpin glycosidases"/>
    <property type="match status" value="1"/>
</dbReference>
<reference key="1">
    <citation type="journal article" date="2007" name="Plant Cell">
        <title>PIP5K9, an Arabidopsis phosphatidylinositol monophosphate kinase, interacts with a cytosolic invertase to negatively regulate sugar-mediated root growth.</title>
        <authorList>
            <person name="Lou Y."/>
            <person name="Gou J.Y."/>
            <person name="Xue H.W."/>
        </authorList>
    </citation>
    <scope>NUCLEOTIDE SEQUENCE [MRNA]</scope>
    <scope>FUNCTION</scope>
    <scope>BIOPHYSICOCHEMICAL PROPERTIES</scope>
    <scope>INTERACTION WITH PIP5K9</scope>
    <scope>SUBCELLULAR LOCATION</scope>
    <scope>DISRUPTION PHENOTYPE</scope>
    <source>
        <strain>cv. Columbia</strain>
        <tissue>Root</tissue>
    </source>
</reference>
<reference key="2">
    <citation type="journal article" date="2000" name="Nature">
        <title>Sequence and analysis of chromosome 1 of the plant Arabidopsis thaliana.</title>
        <authorList>
            <person name="Theologis A."/>
            <person name="Ecker J.R."/>
            <person name="Palm C.J."/>
            <person name="Federspiel N.A."/>
            <person name="Kaul S."/>
            <person name="White O."/>
            <person name="Alonso J."/>
            <person name="Altafi H."/>
            <person name="Araujo R."/>
            <person name="Bowman C.L."/>
            <person name="Brooks S.Y."/>
            <person name="Buehler E."/>
            <person name="Chan A."/>
            <person name="Chao Q."/>
            <person name="Chen H."/>
            <person name="Cheuk R.F."/>
            <person name="Chin C.W."/>
            <person name="Chung M.K."/>
            <person name="Conn L."/>
            <person name="Conway A.B."/>
            <person name="Conway A.R."/>
            <person name="Creasy T.H."/>
            <person name="Dewar K."/>
            <person name="Dunn P."/>
            <person name="Etgu P."/>
            <person name="Feldblyum T.V."/>
            <person name="Feng J.-D."/>
            <person name="Fong B."/>
            <person name="Fujii C.Y."/>
            <person name="Gill J.E."/>
            <person name="Goldsmith A.D."/>
            <person name="Haas B."/>
            <person name="Hansen N.F."/>
            <person name="Hughes B."/>
            <person name="Huizar L."/>
            <person name="Hunter J.L."/>
            <person name="Jenkins J."/>
            <person name="Johnson-Hopson C."/>
            <person name="Khan S."/>
            <person name="Khaykin E."/>
            <person name="Kim C.J."/>
            <person name="Koo H.L."/>
            <person name="Kremenetskaia I."/>
            <person name="Kurtz D.B."/>
            <person name="Kwan A."/>
            <person name="Lam B."/>
            <person name="Langin-Hooper S."/>
            <person name="Lee A."/>
            <person name="Lee J.M."/>
            <person name="Lenz C.A."/>
            <person name="Li J.H."/>
            <person name="Li Y.-P."/>
            <person name="Lin X."/>
            <person name="Liu S.X."/>
            <person name="Liu Z.A."/>
            <person name="Luros J.S."/>
            <person name="Maiti R."/>
            <person name="Marziali A."/>
            <person name="Militscher J."/>
            <person name="Miranda M."/>
            <person name="Nguyen M."/>
            <person name="Nierman W.C."/>
            <person name="Osborne B.I."/>
            <person name="Pai G."/>
            <person name="Peterson J."/>
            <person name="Pham P.K."/>
            <person name="Rizzo M."/>
            <person name="Rooney T."/>
            <person name="Rowley D."/>
            <person name="Sakano H."/>
            <person name="Salzberg S.L."/>
            <person name="Schwartz J.R."/>
            <person name="Shinn P."/>
            <person name="Southwick A.M."/>
            <person name="Sun H."/>
            <person name="Tallon L.J."/>
            <person name="Tambunga G."/>
            <person name="Toriumi M.J."/>
            <person name="Town C.D."/>
            <person name="Utterback T."/>
            <person name="Van Aken S."/>
            <person name="Vaysberg M."/>
            <person name="Vysotskaia V.S."/>
            <person name="Walker M."/>
            <person name="Wu D."/>
            <person name="Yu G."/>
            <person name="Fraser C.M."/>
            <person name="Venter J.C."/>
            <person name="Davis R.W."/>
        </authorList>
    </citation>
    <scope>NUCLEOTIDE SEQUENCE [LARGE SCALE GENOMIC DNA]</scope>
    <source>
        <strain>cv. Columbia</strain>
    </source>
</reference>
<reference key="3">
    <citation type="journal article" date="2017" name="Plant J.">
        <title>Araport11: a complete reannotation of the Arabidopsis thaliana reference genome.</title>
        <authorList>
            <person name="Cheng C.Y."/>
            <person name="Krishnakumar V."/>
            <person name="Chan A.P."/>
            <person name="Thibaud-Nissen F."/>
            <person name="Schobel S."/>
            <person name="Town C.D."/>
        </authorList>
    </citation>
    <scope>GENOME REANNOTATION</scope>
    <source>
        <strain>cv. Columbia</strain>
    </source>
</reference>
<reference key="4">
    <citation type="journal article" date="2003" name="Science">
        <title>Empirical analysis of transcriptional activity in the Arabidopsis genome.</title>
        <authorList>
            <person name="Yamada K."/>
            <person name="Lim J."/>
            <person name="Dale J.M."/>
            <person name="Chen H."/>
            <person name="Shinn P."/>
            <person name="Palm C.J."/>
            <person name="Southwick A.M."/>
            <person name="Wu H.C."/>
            <person name="Kim C.J."/>
            <person name="Nguyen M."/>
            <person name="Pham P.K."/>
            <person name="Cheuk R.F."/>
            <person name="Karlin-Newmann G."/>
            <person name="Liu S.X."/>
            <person name="Lam B."/>
            <person name="Sakano H."/>
            <person name="Wu T."/>
            <person name="Yu G."/>
            <person name="Miranda M."/>
            <person name="Quach H.L."/>
            <person name="Tripp M."/>
            <person name="Chang C.H."/>
            <person name="Lee J.M."/>
            <person name="Toriumi M.J."/>
            <person name="Chan M.M."/>
            <person name="Tang C.C."/>
            <person name="Onodera C.S."/>
            <person name="Deng J.M."/>
            <person name="Akiyama K."/>
            <person name="Ansari Y."/>
            <person name="Arakawa T."/>
            <person name="Banh J."/>
            <person name="Banno F."/>
            <person name="Bowser L."/>
            <person name="Brooks S.Y."/>
            <person name="Carninci P."/>
            <person name="Chao Q."/>
            <person name="Choy N."/>
            <person name="Enju A."/>
            <person name="Goldsmith A.D."/>
            <person name="Gurjal M."/>
            <person name="Hansen N.F."/>
            <person name="Hayashizaki Y."/>
            <person name="Johnson-Hopson C."/>
            <person name="Hsuan V.W."/>
            <person name="Iida K."/>
            <person name="Karnes M."/>
            <person name="Khan S."/>
            <person name="Koesema E."/>
            <person name="Ishida J."/>
            <person name="Jiang P.X."/>
            <person name="Jones T."/>
            <person name="Kawai J."/>
            <person name="Kamiya A."/>
            <person name="Meyers C."/>
            <person name="Nakajima M."/>
            <person name="Narusaka M."/>
            <person name="Seki M."/>
            <person name="Sakurai T."/>
            <person name="Satou M."/>
            <person name="Tamse R."/>
            <person name="Vaysberg M."/>
            <person name="Wallender E.K."/>
            <person name="Wong C."/>
            <person name="Yamamura Y."/>
            <person name="Yuan S."/>
            <person name="Shinozaki K."/>
            <person name="Davis R.W."/>
            <person name="Theologis A."/>
            <person name="Ecker J.R."/>
        </authorList>
    </citation>
    <scope>NUCLEOTIDE SEQUENCE [LARGE SCALE MRNA]</scope>
    <source>
        <strain>cv. Columbia</strain>
    </source>
</reference>
<reference key="5">
    <citation type="journal article" date="2007" name="Plant Mol. Biol.">
        <title>AtCYT-INV1, a neutral invertase, is involved in osmotic stress-induced inhibition on lateral root growth in Arabidopsis.</title>
        <authorList>
            <person name="Qi X."/>
            <person name="Wu Z."/>
            <person name="Li J."/>
            <person name="Mo X."/>
            <person name="Wu S."/>
            <person name="Chu J."/>
            <person name="Wu P."/>
        </authorList>
    </citation>
    <scope>FUNCTION</scope>
    <scope>BIOPHYSICOCHEMICAL PROPERTIES</scope>
    <scope>TISSUE SPECIFICITY</scope>
    <scope>INDUCTION BY MANNITOL</scope>
    <scope>DISRUPTION PHENOTYPE</scope>
</reference>
<reference key="6">
    <citation type="journal article" date="2008" name="J. Proteome Res.">
        <title>Site-specific phosphorylation profiling of Arabidopsis proteins by mass spectrometry and peptide chip analysis.</title>
        <authorList>
            <person name="de la Fuente van Bentem S."/>
            <person name="Anrather D."/>
            <person name="Dohnal I."/>
            <person name="Roitinger E."/>
            <person name="Csaszar E."/>
            <person name="Joore J."/>
            <person name="Buijnink J."/>
            <person name="Carreri A."/>
            <person name="Forzani C."/>
            <person name="Lorkovic Z.J."/>
            <person name="Barta A."/>
            <person name="Lecourieux D."/>
            <person name="Verhounig A."/>
            <person name="Jonak C."/>
            <person name="Hirt H."/>
        </authorList>
    </citation>
    <scope>PHOSPHORYLATION [LARGE SCALE ANALYSIS] AT SER-11; SER-14; SER-61; THR-70 AND SER-547</scope>
    <scope>IDENTIFICATION BY MASS SPECTROMETRY [LARGE SCALE ANALYSIS]</scope>
    <source>
        <tissue>Root</tissue>
    </source>
</reference>
<reference key="7">
    <citation type="journal article" date="2009" name="J. Proteomics">
        <title>Phosphoproteomic analysis of nuclei-enriched fractions from Arabidopsis thaliana.</title>
        <authorList>
            <person name="Jones A.M.E."/>
            <person name="MacLean D."/>
            <person name="Studholme D.J."/>
            <person name="Serna-Sanz A."/>
            <person name="Andreasson E."/>
            <person name="Rathjen J.P."/>
            <person name="Peck S.C."/>
        </authorList>
    </citation>
    <scope>PHOSPHORYLATION [LARGE SCALE ANALYSIS] AT THR-70</scope>
    <scope>IDENTIFICATION BY MASS SPECTROMETRY [LARGE SCALE ANALYSIS]</scope>
    <source>
        <strain>cv. Columbia</strain>
    </source>
</reference>
<reference key="8">
    <citation type="journal article" date="2009" name="Plant Physiol.">
        <title>Large-scale Arabidopsis phosphoproteome profiling reveals novel chloroplast kinase substrates and phosphorylation networks.</title>
        <authorList>
            <person name="Reiland S."/>
            <person name="Messerli G."/>
            <person name="Baerenfaller K."/>
            <person name="Gerrits B."/>
            <person name="Endler A."/>
            <person name="Grossmann J."/>
            <person name="Gruissem W."/>
            <person name="Baginsky S."/>
        </authorList>
    </citation>
    <scope>PHOSPHORYLATION [LARGE SCALE ANALYSIS] AT SER-44; SER-61 AND THR-70</scope>
    <scope>IDENTIFICATION BY MASS SPECTROMETRY [LARGE SCALE ANALYSIS]</scope>
</reference>
<reference key="9">
    <citation type="journal article" date="2009" name="Proc. Natl. Acad. Sci. U.S.A.">
        <title>Normal growth of Arabidopsis requires cytosolic invertase but not sucrose synthase.</title>
        <authorList>
            <person name="Barratt D.H."/>
            <person name="Derbyshire P."/>
            <person name="Findlay K."/>
            <person name="Pike M."/>
            <person name="Wellner N."/>
            <person name="Lunn J."/>
            <person name="Feil R."/>
            <person name="Simpson C."/>
            <person name="Maule A.J."/>
            <person name="Smith A.M."/>
        </authorList>
    </citation>
    <scope>FUNCTION</scope>
</reference>
<reference key="10">
    <citation type="journal article" date="2011" name="J. Exp. Bot.">
        <title>Exploring the neutral invertase-oxidative stress defence connection in Arabidopsis thaliana.</title>
        <authorList>
            <person name="Xiang L."/>
            <person name="Le Roy K."/>
            <person name="Bolouri-Moghaddam M.R."/>
            <person name="Vanhaecke M."/>
            <person name="Lammens W."/>
            <person name="Rolland F."/>
            <person name="Van den Ende W."/>
        </authorList>
    </citation>
    <scope>FUNCTION</scope>
    <scope>CATALYTIC ACTIVITY</scope>
    <scope>BIOPHYSICOCHEMICAL PROPERTIES</scope>
    <scope>SUBCELLULAR LOCATION</scope>
    <scope>INDUCTION BY HYDROGEN PEROXIDE</scope>
    <scope>GENE FAMILY</scope>
    <scope>DISRUPTION PHENOTYPE</scope>
</reference>
<reference key="11">
    <citation type="journal article" date="2012" name="Mol. Cell. Proteomics">
        <title>Comparative large-scale characterisation of plant vs. mammal proteins reveals similar and idiosyncratic N-alpha acetylation features.</title>
        <authorList>
            <person name="Bienvenut W.V."/>
            <person name="Sumpton D."/>
            <person name="Martinez A."/>
            <person name="Lilla S."/>
            <person name="Espagne C."/>
            <person name="Meinnel T."/>
            <person name="Giglione C."/>
        </authorList>
    </citation>
    <scope>ACETYLATION [LARGE SCALE ANALYSIS] AT MET-1</scope>
    <scope>IDENTIFICATION BY MASS SPECTROMETRY [LARGE SCALE ANALYSIS]</scope>
</reference>
<reference key="12">
    <citation type="journal article" date="2014" name="Plant J.">
        <title>Light modulated activity of root alkaline/neutral invertase involves the interaction with 14-3-3 proteins.</title>
        <authorList>
            <person name="Gao J."/>
            <person name="van Kleeff P.J."/>
            <person name="Oecking C."/>
            <person name="Li K.W."/>
            <person name="Erban A."/>
            <person name="Kopka J."/>
            <person name="Hincha D.K."/>
            <person name="de Boer A.H."/>
        </authorList>
    </citation>
    <scope>FUNCTION</scope>
    <scope>BIOPHYSICOCHEMICAL PROPERTIES</scope>
    <scope>INTERACTION WITH GRF1; GRF2; GRF3; GRF4; GRF5; GRF6; GRF7; GRF8 AND GRF10</scope>
    <scope>PHOSPHORYLATION AT SER-547</scope>
    <scope>INDUCTION BY LIGHT</scope>
    <scope>MUTAGENESIS OF SER-547</scope>
</reference>
<reference key="13">
    <citation type="journal article" date="2018" name="Plant J.">
        <title>Cytosolic invertases contribute to cellulose biosynthesis and influence carbon partitioning in seedlings of Arabidopsis thaliana.</title>
        <authorList>
            <person name="Barnes W.J."/>
            <person name="Anderson C.T."/>
        </authorList>
    </citation>
    <scope>FUNCTION</scope>
</reference>
<reference key="14">
    <citation type="journal article" date="2020" name="Acta Crystallogr. F Struct. Biol. Commun.">
        <title>Crystal structure of Arabidopsis thaliana neutral invertase 2.</title>
        <authorList>
            <person name="Tarkowski L.P."/>
            <person name="Tsirkone V.G."/>
            <person name="Osipov E.M."/>
            <person name="Beelen S."/>
            <person name="Lammens W."/>
            <person name="Vergauwen R."/>
            <person name="Van den Ende W."/>
            <person name="Strelkov S.V."/>
        </authorList>
    </citation>
    <scope>X-RAY CRYSTALLOGRAPHY (3.39 ANGSTROMS)</scope>
    <scope>SUBUNIT</scope>
</reference>
<keyword id="KW-0002">3D-structure</keyword>
<keyword id="KW-0007">Acetylation</keyword>
<keyword id="KW-0025">Alternative splicing</keyword>
<keyword id="KW-0119">Carbohydrate metabolism</keyword>
<keyword id="KW-0963">Cytoplasm</keyword>
<keyword id="KW-0326">Glycosidase</keyword>
<keyword id="KW-0378">Hydrolase</keyword>
<keyword id="KW-0539">Nucleus</keyword>
<keyword id="KW-0597">Phosphoprotein</keyword>
<keyword id="KW-1185">Reference proteome</keyword>
<evidence type="ECO:0000256" key="1">
    <source>
        <dbReference type="SAM" id="MobiDB-lite"/>
    </source>
</evidence>
<evidence type="ECO:0000269" key="2">
    <source>
    </source>
</evidence>
<evidence type="ECO:0000269" key="3">
    <source>
    </source>
</evidence>
<evidence type="ECO:0000269" key="4">
    <source>
    </source>
</evidence>
<evidence type="ECO:0000269" key="5">
    <source>
    </source>
</evidence>
<evidence type="ECO:0000269" key="6">
    <source>
    </source>
</evidence>
<evidence type="ECO:0000269" key="7">
    <source>
    </source>
</evidence>
<evidence type="ECO:0000269" key="8">
    <source>
    </source>
</evidence>
<evidence type="ECO:0000303" key="9">
    <source>
    </source>
</evidence>
<evidence type="ECO:0000303" key="10">
    <source>
    </source>
</evidence>
<evidence type="ECO:0000303" key="11">
    <source>
    </source>
</evidence>
<evidence type="ECO:0000305" key="12"/>
<evidence type="ECO:0007744" key="13">
    <source>
    </source>
</evidence>
<evidence type="ECO:0007744" key="14">
    <source>
    </source>
</evidence>
<evidence type="ECO:0007744" key="15">
    <source>
    </source>
</evidence>
<evidence type="ECO:0007744" key="16">
    <source>
    </source>
</evidence>
<evidence type="ECO:0007829" key="17">
    <source>
        <dbReference type="PDB" id="6TTJ"/>
    </source>
</evidence>
<proteinExistence type="evidence at protein level"/>
<sequence length="551" mass="62834">MEGVGLRAVGSHCSLSEMDDLDLTRALDKPRLKIERKRSFDERSMSELSTGYSRHDGIHDSPRGRSVLDTPLSSARNSFEPHPMMAEAWEALRRSMVFFRGQPVGTLAAVDNTTDEVLNYDQVFVRDFVPSALAFLMNGEPDIVKHFLLKTLQLQGWEKRVDRFKLGEGVMPASFKVLHDPIRETDNIVADFGESAIGRVAPVDSGFWWIILLRAYTKSTGDLTLSETPECQKGMKLILSLCLAEGFDTFPTLLCADGCSMIDRRMGVYGYPIEIQALFFMALRSALSMLKPDGDGREVIERIVKRLHALSFHMRNYFWLDHQNLNDIYRFKTEEYSHTAVNKFNVMPDSIPEWVFDFMPLRGGYFVGNVGPAHMDFRWFALGNCVSILSSLATPDQSMAIMDLLEHRWAELVGEMPLKICYPCLEGHEWRIVTGCDPKNTRWSYHNGGSWPVLLWQLTAACIKTGRPQIARRAVDLIESRLHRDCWPEYYDGKLGRYVGKQARKYQTWSIAGYLVAKMLLEDPSHIGMISLEEDKLMKPVIKRSASWPQL</sequence>
<accession>Q9LQF2</accession>
<organism>
    <name type="scientific">Arabidopsis thaliana</name>
    <name type="common">Mouse-ear cress</name>
    <dbReference type="NCBI Taxonomy" id="3702"/>
    <lineage>
        <taxon>Eukaryota</taxon>
        <taxon>Viridiplantae</taxon>
        <taxon>Streptophyta</taxon>
        <taxon>Embryophyta</taxon>
        <taxon>Tracheophyta</taxon>
        <taxon>Spermatophyta</taxon>
        <taxon>Magnoliopsida</taxon>
        <taxon>eudicotyledons</taxon>
        <taxon>Gunneridae</taxon>
        <taxon>Pentapetalae</taxon>
        <taxon>rosids</taxon>
        <taxon>malvids</taxon>
        <taxon>Brassicales</taxon>
        <taxon>Brassicaceae</taxon>
        <taxon>Camelineae</taxon>
        <taxon>Arabidopsis</taxon>
    </lineage>
</organism>
<feature type="chain" id="PRO_0000422134" description="Alkaline/neutral invertase CINV1">
    <location>
        <begin position="1"/>
        <end position="551"/>
    </location>
</feature>
<feature type="region of interest" description="Disordered" evidence="1">
    <location>
        <begin position="50"/>
        <end position="74"/>
    </location>
</feature>
<feature type="compositionally biased region" description="Basic and acidic residues" evidence="1">
    <location>
        <begin position="53"/>
        <end position="63"/>
    </location>
</feature>
<feature type="modified residue" description="N-acetylmethionine" evidence="16">
    <location>
        <position position="1"/>
    </location>
</feature>
<feature type="modified residue" description="Phosphoserine" evidence="13">
    <location>
        <position position="11"/>
    </location>
</feature>
<feature type="modified residue" description="Phosphoserine" evidence="13">
    <location>
        <position position="14"/>
    </location>
</feature>
<feature type="modified residue" description="Phosphoserine" evidence="15">
    <location>
        <position position="44"/>
    </location>
</feature>
<feature type="modified residue" description="Phosphoserine" evidence="13 15">
    <location>
        <position position="61"/>
    </location>
</feature>
<feature type="modified residue" description="Phosphothreonine" evidence="13 14 15">
    <location>
        <position position="70"/>
    </location>
</feature>
<feature type="modified residue" description="Phosphoserine" evidence="6 13">
    <location>
        <position position="547"/>
    </location>
</feature>
<feature type="mutagenesis site" description="No effect on catalytic activity, but prevents interaction with 14-3-3 proteins." evidence="6">
    <original>S</original>
    <variation>A</variation>
    <location>
        <position position="547"/>
    </location>
</feature>
<feature type="helix" evidence="17">
    <location>
        <begin position="85"/>
        <end position="94"/>
    </location>
</feature>
<feature type="strand" evidence="17">
    <location>
        <begin position="96"/>
        <end position="99"/>
    </location>
</feature>
<feature type="strand" evidence="17">
    <location>
        <begin position="102"/>
        <end position="106"/>
    </location>
</feature>
<feature type="strand" evidence="17">
    <location>
        <begin position="122"/>
        <end position="124"/>
    </location>
</feature>
<feature type="helix" evidence="17">
    <location>
        <begin position="125"/>
        <end position="138"/>
    </location>
</feature>
<feature type="helix" evidence="17">
    <location>
        <begin position="142"/>
        <end position="155"/>
    </location>
</feature>
<feature type="strand" evidence="17">
    <location>
        <begin position="173"/>
        <end position="177"/>
    </location>
</feature>
<feature type="strand" evidence="17">
    <location>
        <begin position="188"/>
        <end position="196"/>
    </location>
</feature>
<feature type="helix" evidence="17">
    <location>
        <begin position="197"/>
        <end position="199"/>
    </location>
</feature>
<feature type="helix" evidence="17">
    <location>
        <begin position="204"/>
        <end position="220"/>
    </location>
</feature>
<feature type="turn" evidence="17">
    <location>
        <begin position="223"/>
        <end position="227"/>
    </location>
</feature>
<feature type="helix" evidence="17">
    <location>
        <begin position="229"/>
        <end position="242"/>
    </location>
</feature>
<feature type="strand" evidence="17">
    <location>
        <begin position="250"/>
        <end position="252"/>
    </location>
</feature>
<feature type="strand" evidence="17">
    <location>
        <begin position="270"/>
        <end position="272"/>
    </location>
</feature>
<feature type="helix" evidence="17">
    <location>
        <begin position="273"/>
        <end position="287"/>
    </location>
</feature>
<feature type="helix" evidence="17">
    <location>
        <begin position="294"/>
        <end position="316"/>
    </location>
</feature>
<feature type="strand" evidence="17">
    <location>
        <begin position="319"/>
        <end position="321"/>
    </location>
</feature>
<feature type="helix" evidence="17">
    <location>
        <begin position="322"/>
        <end position="329"/>
    </location>
</feature>
<feature type="strand" evidence="17">
    <location>
        <begin position="337"/>
        <end position="339"/>
    </location>
</feature>
<feature type="helix" evidence="17">
    <location>
        <begin position="348"/>
        <end position="350"/>
    </location>
</feature>
<feature type="helix" evidence="17">
    <location>
        <begin position="353"/>
        <end position="358"/>
    </location>
</feature>
<feature type="strand" evidence="17">
    <location>
        <begin position="364"/>
        <end position="366"/>
    </location>
</feature>
<feature type="strand" evidence="17">
    <location>
        <begin position="368"/>
        <end position="371"/>
    </location>
</feature>
<feature type="strand" evidence="17">
    <location>
        <begin position="374"/>
        <end position="376"/>
    </location>
</feature>
<feature type="helix" evidence="17">
    <location>
        <begin position="381"/>
        <end position="389"/>
    </location>
</feature>
<feature type="helix" evidence="17">
    <location>
        <begin position="395"/>
        <end position="407"/>
    </location>
</feature>
<feature type="helix" evidence="17">
    <location>
        <begin position="409"/>
        <end position="412"/>
    </location>
</feature>
<feature type="turn" evidence="17">
    <location>
        <begin position="413"/>
        <end position="415"/>
    </location>
</feature>
<feature type="strand" evidence="17">
    <location>
        <begin position="419"/>
        <end position="423"/>
    </location>
</feature>
<feature type="helix" evidence="17">
    <location>
        <begin position="428"/>
        <end position="433"/>
    </location>
</feature>
<feature type="turn" evidence="17">
    <location>
        <begin position="445"/>
        <end position="447"/>
    </location>
</feature>
<feature type="helix" evidence="17">
    <location>
        <begin position="454"/>
        <end position="464"/>
    </location>
</feature>
<feature type="helix" evidence="17">
    <location>
        <begin position="468"/>
        <end position="478"/>
    </location>
</feature>
<feature type="turn" evidence="17">
    <location>
        <begin position="479"/>
        <end position="486"/>
    </location>
</feature>
<feature type="strand" evidence="17">
    <location>
        <begin position="491"/>
        <end position="496"/>
    </location>
</feature>
<feature type="strand" evidence="17">
    <location>
        <begin position="505"/>
        <end position="507"/>
    </location>
</feature>
<feature type="helix" evidence="17">
    <location>
        <begin position="508"/>
        <end position="522"/>
    </location>
</feature>
<feature type="helix" evidence="17">
    <location>
        <begin position="524"/>
        <end position="529"/>
    </location>
</feature>